<proteinExistence type="evidence at protein level"/>
<gene>
    <name type="primary">Ssbp3</name>
    <name type="synonym">Ssdp</name>
    <name type="synonym">Ssdp1</name>
    <name type="synonym">Ssdp3</name>
</gene>
<organism>
    <name type="scientific">Rattus norvegicus</name>
    <name type="common">Rat</name>
    <dbReference type="NCBI Taxonomy" id="10116"/>
    <lineage>
        <taxon>Eukaryota</taxon>
        <taxon>Metazoa</taxon>
        <taxon>Chordata</taxon>
        <taxon>Craniata</taxon>
        <taxon>Vertebrata</taxon>
        <taxon>Euteleostomi</taxon>
        <taxon>Mammalia</taxon>
        <taxon>Eutheria</taxon>
        <taxon>Euarchontoglires</taxon>
        <taxon>Glires</taxon>
        <taxon>Rodentia</taxon>
        <taxon>Myomorpha</taxon>
        <taxon>Muroidea</taxon>
        <taxon>Muridae</taxon>
        <taxon>Murinae</taxon>
        <taxon>Rattus</taxon>
    </lineage>
</organism>
<evidence type="ECO:0000250" key="1"/>
<evidence type="ECO:0000250" key="2">
    <source>
        <dbReference type="UniProtKB" id="Q9BWW4"/>
    </source>
</evidence>
<evidence type="ECO:0000250" key="3">
    <source>
        <dbReference type="UniProtKB" id="Q9D032"/>
    </source>
</evidence>
<evidence type="ECO:0000255" key="4">
    <source>
        <dbReference type="PROSITE-ProRule" id="PRU00126"/>
    </source>
</evidence>
<evidence type="ECO:0000256" key="5">
    <source>
        <dbReference type="SAM" id="MobiDB-lite"/>
    </source>
</evidence>
<evidence type="ECO:0007744" key="6">
    <source>
    </source>
</evidence>
<protein>
    <recommendedName>
        <fullName>Single-stranded DNA-binding protein 3</fullName>
    </recommendedName>
    <alternativeName>
        <fullName>Sequence-specific single-stranded-DNA-binding protein</fullName>
    </alternativeName>
</protein>
<comment type="function">
    <text evidence="1">May be involved in transcription regulation of the alpha 2(I) collagen gene where it binds to the single-stranded polypyrimidine sequences in the promoter region.</text>
</comment>
<comment type="subcellular location">
    <subcellularLocation>
        <location evidence="1">Nucleus</location>
    </subcellularLocation>
</comment>
<dbReference type="EMBL" id="AF121893">
    <property type="protein sequence ID" value="AAD52710.1"/>
    <property type="molecule type" value="mRNA"/>
</dbReference>
<dbReference type="RefSeq" id="NP_445810.1">
    <property type="nucleotide sequence ID" value="NM_053358.1"/>
</dbReference>
<dbReference type="SMR" id="Q9R050"/>
<dbReference type="FunCoup" id="Q9R050">
    <property type="interactions" value="1543"/>
</dbReference>
<dbReference type="STRING" id="10116.ENSRNOP00000011408"/>
<dbReference type="iPTMnet" id="Q9R050"/>
<dbReference type="PhosphoSitePlus" id="Q9R050"/>
<dbReference type="PaxDb" id="10116-ENSRNOP00000011408"/>
<dbReference type="GeneID" id="84354"/>
<dbReference type="KEGG" id="rno:84354"/>
<dbReference type="UCSC" id="RGD:621502">
    <property type="organism name" value="rat"/>
</dbReference>
<dbReference type="AGR" id="RGD:621502"/>
<dbReference type="CTD" id="23648"/>
<dbReference type="RGD" id="621502">
    <property type="gene designation" value="Ssbp3"/>
</dbReference>
<dbReference type="eggNOG" id="KOG4594">
    <property type="taxonomic scope" value="Eukaryota"/>
</dbReference>
<dbReference type="InParanoid" id="Q9R050"/>
<dbReference type="OrthoDB" id="5600002at2759"/>
<dbReference type="PhylomeDB" id="Q9R050"/>
<dbReference type="PRO" id="PR:Q9R050"/>
<dbReference type="Proteomes" id="UP000002494">
    <property type="component" value="Unplaced"/>
</dbReference>
<dbReference type="GO" id="GO:0005634">
    <property type="term" value="C:nucleus"/>
    <property type="evidence" value="ECO:0000318"/>
    <property type="project" value="GO_Central"/>
</dbReference>
<dbReference type="GO" id="GO:0032991">
    <property type="term" value="C:protein-containing complex"/>
    <property type="evidence" value="ECO:0000266"/>
    <property type="project" value="RGD"/>
</dbReference>
<dbReference type="GO" id="GO:0005667">
    <property type="term" value="C:transcription regulator complex"/>
    <property type="evidence" value="ECO:0000266"/>
    <property type="project" value="RGD"/>
</dbReference>
<dbReference type="GO" id="GO:0003697">
    <property type="term" value="F:single-stranded DNA binding"/>
    <property type="evidence" value="ECO:0000304"/>
    <property type="project" value="RGD"/>
</dbReference>
<dbReference type="GO" id="GO:0003713">
    <property type="term" value="F:transcription coactivator activity"/>
    <property type="evidence" value="ECO:0000266"/>
    <property type="project" value="RGD"/>
</dbReference>
<dbReference type="GO" id="GO:0060322">
    <property type="term" value="P:head development"/>
    <property type="evidence" value="ECO:0000266"/>
    <property type="project" value="RGD"/>
</dbReference>
<dbReference type="GO" id="GO:0060323">
    <property type="term" value="P:head morphogenesis"/>
    <property type="evidence" value="ECO:0000266"/>
    <property type="project" value="RGD"/>
</dbReference>
<dbReference type="GO" id="GO:0002244">
    <property type="term" value="P:hematopoietic progenitor cell differentiation"/>
    <property type="evidence" value="ECO:0000266"/>
    <property type="project" value="RGD"/>
</dbReference>
<dbReference type="GO" id="GO:0048382">
    <property type="term" value="P:mesendoderm development"/>
    <property type="evidence" value="ECO:0000266"/>
    <property type="project" value="RGD"/>
</dbReference>
<dbReference type="GO" id="GO:0021547">
    <property type="term" value="P:midbrain-hindbrain boundary initiation"/>
    <property type="evidence" value="ECO:0000266"/>
    <property type="project" value="RGD"/>
</dbReference>
<dbReference type="GO" id="GO:2000744">
    <property type="term" value="P:positive regulation of anterior head development"/>
    <property type="evidence" value="ECO:0000266"/>
    <property type="project" value="RGD"/>
</dbReference>
<dbReference type="GO" id="GO:0008284">
    <property type="term" value="P:positive regulation of cell population proliferation"/>
    <property type="evidence" value="ECO:0000266"/>
    <property type="project" value="RGD"/>
</dbReference>
<dbReference type="GO" id="GO:0045893">
    <property type="term" value="P:positive regulation of DNA-templated transcription"/>
    <property type="evidence" value="ECO:0000266"/>
    <property type="project" value="RGD"/>
</dbReference>
<dbReference type="GO" id="GO:0045944">
    <property type="term" value="P:positive regulation of transcription by RNA polymerase II"/>
    <property type="evidence" value="ECO:0000266"/>
    <property type="project" value="RGD"/>
</dbReference>
<dbReference type="GO" id="GO:0021501">
    <property type="term" value="P:prechordal plate formation"/>
    <property type="evidence" value="ECO:0000266"/>
    <property type="project" value="RGD"/>
</dbReference>
<dbReference type="GO" id="GO:0065003">
    <property type="term" value="P:protein-containing complex assembly"/>
    <property type="evidence" value="ECO:0000266"/>
    <property type="project" value="RGD"/>
</dbReference>
<dbReference type="InterPro" id="IPR006594">
    <property type="entry name" value="LisH"/>
</dbReference>
<dbReference type="InterPro" id="IPR008116">
    <property type="entry name" value="SSDP_DNA-bd"/>
</dbReference>
<dbReference type="PANTHER" id="PTHR12610">
    <property type="entry name" value="SINGLE STRANDED DNA BINDING PROTEIN"/>
    <property type="match status" value="1"/>
</dbReference>
<dbReference type="PANTHER" id="PTHR12610:SF22">
    <property type="entry name" value="SINGLE-STRANDED DNA-BINDING PROTEIN 3"/>
    <property type="match status" value="1"/>
</dbReference>
<dbReference type="Pfam" id="PF04503">
    <property type="entry name" value="SSDP"/>
    <property type="match status" value="2"/>
</dbReference>
<dbReference type="PRINTS" id="PR01743">
    <property type="entry name" value="SSDNABINDING"/>
</dbReference>
<dbReference type="SMART" id="SM00667">
    <property type="entry name" value="LisH"/>
    <property type="match status" value="1"/>
</dbReference>
<dbReference type="PROSITE" id="PS50896">
    <property type="entry name" value="LISH"/>
    <property type="match status" value="1"/>
</dbReference>
<sequence length="361" mass="37714">MFAKGKGSAVPSDGQAREKLALYVYEYLLHVGAQKSAQTFLSEIRWEKNITLGEPPGFLHSWWCVFWDLYCAAPERRDTCEHSSEAKAFHDYSAAAAPSPVLGNIPPNDGMPGGPIPPGFFQPFMSPRYAGGPRPPIRMGNQPPGGVPGTQPLMPNSMDPTRQQGHPNMGGSMQRMNPPRGMGPMGPGPQNYGSGMRPPPNSLGPAMPGINMGPGAGRPWPNPNSANSIPYSSSSPGTYVGPPGGGGPPGTPIMPSPADSTNSSDNIYTMINPVPPGGSRSNFPMGPGSDGPMGGMGGMEPHHMNGSLGSGDINGLPKNSPNNISGISNPPGTPRDDGELGGNFLHSFQNDNYSPSMTMSV</sequence>
<name>SSBP3_RAT</name>
<reference key="1">
    <citation type="journal article" date="1999" name="Gene">
        <title>Cloning of a cDNA encoding a sequence-specific single-stranded-DNA-binding protein from Rattus norvegicus.</title>
        <authorList>
            <person name="Raval-Fernandes S."/>
            <person name="Kickhoefer V.A."/>
            <person name="Rome L.H."/>
        </authorList>
    </citation>
    <scope>NUCLEOTIDE SEQUENCE [MRNA]</scope>
    <source>
        <strain>Sprague-Dawley</strain>
        <tissue>Brain cortex</tissue>
    </source>
</reference>
<reference key="2">
    <citation type="journal article" date="2012" name="Nat. Commun.">
        <title>Quantitative maps of protein phosphorylation sites across 14 different rat organs and tissues.</title>
        <authorList>
            <person name="Lundby A."/>
            <person name="Secher A."/>
            <person name="Lage K."/>
            <person name="Nordsborg N.B."/>
            <person name="Dmytriyev A."/>
            <person name="Lundby C."/>
            <person name="Olsen J.V."/>
        </authorList>
    </citation>
    <scope>PHOSPHORYLATION [LARGE SCALE ANALYSIS] AT SER-320; THR-333 AND SER-360</scope>
    <scope>IDENTIFICATION BY MASS SPECTROMETRY [LARGE SCALE ANALYSIS]</scope>
</reference>
<accession>Q9R050</accession>
<feature type="chain" id="PRO_0000123830" description="Single-stranded DNA-binding protein 3">
    <location>
        <begin position="1"/>
        <end position="361"/>
    </location>
</feature>
<feature type="domain" description="LisH" evidence="4">
    <location>
        <begin position="16"/>
        <end position="48"/>
    </location>
</feature>
<feature type="region of interest" description="Disordered" evidence="5">
    <location>
        <begin position="140"/>
        <end position="166"/>
    </location>
</feature>
<feature type="region of interest" description="Disordered" evidence="5">
    <location>
        <begin position="184"/>
        <end position="361"/>
    </location>
</feature>
<feature type="compositionally biased region" description="Low complexity" evidence="5">
    <location>
        <begin position="223"/>
        <end position="241"/>
    </location>
</feature>
<feature type="compositionally biased region" description="Pro residues" evidence="5">
    <location>
        <begin position="245"/>
        <end position="255"/>
    </location>
</feature>
<feature type="compositionally biased region" description="Polar residues" evidence="5">
    <location>
        <begin position="258"/>
        <end position="269"/>
    </location>
</feature>
<feature type="compositionally biased region" description="Gly residues" evidence="5">
    <location>
        <begin position="288"/>
        <end position="298"/>
    </location>
</feature>
<feature type="compositionally biased region" description="Low complexity" evidence="5">
    <location>
        <begin position="319"/>
        <end position="330"/>
    </location>
</feature>
<feature type="compositionally biased region" description="Polar residues" evidence="5">
    <location>
        <begin position="346"/>
        <end position="361"/>
    </location>
</feature>
<feature type="modified residue" description="N-acetylmethionine" evidence="2">
    <location>
        <position position="1"/>
    </location>
</feature>
<feature type="modified residue" description="Asymmetric dimethylarginine" evidence="2">
    <location>
        <position position="128"/>
    </location>
</feature>
<feature type="modified residue" description="Asymmetric dimethylarginine" evidence="2">
    <location>
        <position position="134"/>
    </location>
</feature>
<feature type="modified residue" description="Asymmetric dimethylarginine" evidence="2">
    <location>
        <position position="138"/>
    </location>
</feature>
<feature type="modified residue" description="Phosphoserine" evidence="6">
    <location>
        <position position="320"/>
    </location>
</feature>
<feature type="modified residue" description="Phosphoserine" evidence="2">
    <location>
        <position position="325"/>
    </location>
</feature>
<feature type="modified residue" description="Phosphoserine" evidence="3">
    <location>
        <position position="328"/>
    </location>
</feature>
<feature type="modified residue" description="Phosphothreonine" evidence="6">
    <location>
        <position position="333"/>
    </location>
</feature>
<feature type="modified residue" description="Phosphoserine" evidence="2">
    <location>
        <position position="354"/>
    </location>
</feature>
<feature type="modified residue" description="Phosphoserine" evidence="6">
    <location>
        <position position="360"/>
    </location>
</feature>
<keyword id="KW-0007">Acetylation</keyword>
<keyword id="KW-0238">DNA-binding</keyword>
<keyword id="KW-0488">Methylation</keyword>
<keyword id="KW-0539">Nucleus</keyword>
<keyword id="KW-0597">Phosphoprotein</keyword>
<keyword id="KW-1185">Reference proteome</keyword>
<keyword id="KW-0804">Transcription</keyword>
<keyword id="KW-0805">Transcription regulation</keyword>